<proteinExistence type="evidence at transcript level"/>
<accession>Q8SXX4</accession>
<accession>Q9VT10</accession>
<accession>Q9VT12</accession>
<feature type="chain" id="PRO_0000089315" description="Capon-like protein">
    <location>
        <begin position="1"/>
        <end position="698"/>
    </location>
</feature>
<feature type="domain" description="PID" evidence="3">
    <location>
        <begin position="25"/>
        <end position="194"/>
    </location>
</feature>
<feature type="region of interest" description="Disordered" evidence="4">
    <location>
        <begin position="191"/>
        <end position="240"/>
    </location>
</feature>
<feature type="region of interest" description="Disordered" evidence="4">
    <location>
        <begin position="396"/>
        <end position="460"/>
    </location>
</feature>
<feature type="region of interest" description="Disordered" evidence="4">
    <location>
        <begin position="588"/>
        <end position="698"/>
    </location>
</feature>
<feature type="coiled-coil region" evidence="2">
    <location>
        <begin position="265"/>
        <end position="327"/>
    </location>
</feature>
<feature type="coiled-coil region" evidence="2">
    <location>
        <begin position="379"/>
        <end position="484"/>
    </location>
</feature>
<feature type="coiled-coil region" evidence="2">
    <location>
        <begin position="554"/>
        <end position="583"/>
    </location>
</feature>
<feature type="compositionally biased region" description="Basic and acidic residues" evidence="4">
    <location>
        <begin position="201"/>
        <end position="217"/>
    </location>
</feature>
<feature type="compositionally biased region" description="Low complexity" evidence="4">
    <location>
        <begin position="396"/>
        <end position="423"/>
    </location>
</feature>
<feature type="compositionally biased region" description="Polar residues" evidence="4">
    <location>
        <begin position="436"/>
        <end position="447"/>
    </location>
</feature>
<feature type="compositionally biased region" description="Low complexity" evidence="4">
    <location>
        <begin position="448"/>
        <end position="458"/>
    </location>
</feature>
<feature type="compositionally biased region" description="Low complexity" evidence="4">
    <location>
        <begin position="590"/>
        <end position="640"/>
    </location>
</feature>
<feature type="compositionally biased region" description="Polar residues" evidence="4">
    <location>
        <begin position="662"/>
        <end position="672"/>
    </location>
</feature>
<feature type="compositionally biased region" description="Polar residues" evidence="4">
    <location>
        <begin position="679"/>
        <end position="698"/>
    </location>
</feature>
<feature type="splice variant" id="VSP_012464" description="In isoform 2." evidence="6">
    <original>MPSTPYDLVQDDQDLRVPLHAEQAFFHGITFQAKFVGWEEVPRPNTRAEIVQAMRRIRYECKVQNLKKRKVTIHISVNGVRVVLKKRRRKKKNWTNDPEDIELLNHPIYRIFYVSHDSSDLKIFSYIARDASTDTFKCSVFKSHKK</original>
    <variation>MKHEKTLAMAAPHKQRHADSSAHVVPRSPITKAFDFLPWTRSRSKVNMTKVQSQPAEQQASVSTVTPAEKSSEVHYHKNIFRSGGGLIRDILVGDKNLQLKDKPPQSPVPSHKKKQKHLSRNKSLDIRELIGCVEREMAPATGGGPVSQPPRFIDDTYIDHKPKHILFNDDENTVYIIKKEQPVAKSSHKASNSTSNAAQSNGDVLKARLKFKRLPGDHYEASPEALRRAHLLHQRSEQRHQLQRRKSLSDQQSSSSLSSGGGGGGNANGSIMLERPKTDKPRKKLSFREPIIAGDQILPLILSEQRQARQRRRSSPLERSRVGLAIADCDNLCNNRTKDAISCGCATSDPE</variation>
    <location>
        <begin position="1"/>
        <end position="146"/>
    </location>
</feature>
<organism>
    <name type="scientific">Drosophila melanogaster</name>
    <name type="common">Fruit fly</name>
    <dbReference type="NCBI Taxonomy" id="7227"/>
    <lineage>
        <taxon>Eukaryota</taxon>
        <taxon>Metazoa</taxon>
        <taxon>Ecdysozoa</taxon>
        <taxon>Arthropoda</taxon>
        <taxon>Hexapoda</taxon>
        <taxon>Insecta</taxon>
        <taxon>Pterygota</taxon>
        <taxon>Neoptera</taxon>
        <taxon>Endopterygota</taxon>
        <taxon>Diptera</taxon>
        <taxon>Brachycera</taxon>
        <taxon>Muscomorpha</taxon>
        <taxon>Ephydroidea</taxon>
        <taxon>Drosophilidae</taxon>
        <taxon>Drosophila</taxon>
        <taxon>Sophophora</taxon>
    </lineage>
</organism>
<sequence length="698" mass="77280">MPSTPYDLVQDDQDLRVPLHAEQAFFHGITFQAKFVGWEEVPRPNTRAEIVQAMRRIRYECKVQNLKKRKVTIHISVNGVRVVLKKRRRKKKNWTNDPEDIELLNHPIYRIFYVSHDSSDLKIFSYIARDASTDTFKCSVFKSHKKSQAMRIVRTVGQAFEVCHKFNLHKNSLEPNDERSDISSSELLDVEQISEQQLSEDGERGGGDNETPKKEHLAITPDLNHTQPQRPNHLDIMPSHSSLRKSNSLLCDVDDKSPGSPSSPRSEITQLKDQLEAQALQTRQALGQLMLVREQLISETNARIEAQARTQQLLQQNRELLEHLASLGAYNEQQTAGLTSANIGMAPQQSQLQMLLQATSNNNNLATINQQISNLGSINQQLTSLSHQLSGLNQQSQHLQNLQQQQQQQQQQQQQQTQAAPTAATPPPAAGGSSPYPSMSALQSISNQLQQQQQQQQQDALSKDLFQVNQELLNRLQALNLNANPGQSQPTPSATAHNSFFYVNPLSCTPATPNNNAGGAGGFNFLTSPAATGTLTPSPLGTMNRNSFAGSSSLNEDIRLSIEQNLNNLEEQLKAAVSNGNLAGLACGGSTSTRDTSRSSSTLDSPSSPRLRSSNNNISPGSSNGNQNHNNNSNSNSSSSRETRFNTVLLRVTDEAGHQRKLSATPSFITRSTSEKVPNRSQMMSQVQRTTWARHTTK</sequence>
<name>CAPON_DROME</name>
<dbReference type="EMBL" id="AE014296">
    <property type="protein sequence ID" value="AAF50244.3"/>
    <property type="molecule type" value="Genomic_DNA"/>
</dbReference>
<dbReference type="EMBL" id="AE014296">
    <property type="protein sequence ID" value="AAF50246.2"/>
    <property type="molecule type" value="Genomic_DNA"/>
</dbReference>
<dbReference type="EMBL" id="AY075524">
    <property type="protein sequence ID" value="AAL68331.1"/>
    <property type="molecule type" value="mRNA"/>
</dbReference>
<dbReference type="EMBL" id="AY129453">
    <property type="protein sequence ID" value="AAM76195.1"/>
    <property type="molecule type" value="mRNA"/>
</dbReference>
<dbReference type="EMBL" id="BT001734">
    <property type="protein sequence ID" value="AAN71489.1"/>
    <property type="molecule type" value="mRNA"/>
</dbReference>
<dbReference type="RefSeq" id="NP_729509.1">
    <molecule id="Q8SXX4-1"/>
    <property type="nucleotide sequence ID" value="NM_168352.2"/>
</dbReference>
<dbReference type="RefSeq" id="NP_729510.1">
    <molecule id="Q8SXX4-2"/>
    <property type="nucleotide sequence ID" value="NM_168353.2"/>
</dbReference>
<dbReference type="SMR" id="Q8SXX4"/>
<dbReference type="FunCoup" id="Q8SXX4">
    <property type="interactions" value="69"/>
</dbReference>
<dbReference type="IntAct" id="Q8SXX4">
    <property type="interactions" value="13"/>
</dbReference>
<dbReference type="STRING" id="7227.FBpp0291850"/>
<dbReference type="GlyGen" id="Q8SXX4">
    <property type="glycosylation" value="3 sites"/>
</dbReference>
<dbReference type="PaxDb" id="7227-FBpp0291850"/>
<dbReference type="DNASU" id="39111"/>
<dbReference type="EnsemblMetazoa" id="FBtr0302709">
    <molecule id="Q8SXX4-1"/>
    <property type="protein sequence ID" value="FBpp0291849"/>
    <property type="gene ID" value="FBgn0261555"/>
</dbReference>
<dbReference type="EnsemblMetazoa" id="FBtr0302710">
    <molecule id="Q8SXX4-2"/>
    <property type="protein sequence ID" value="FBpp0291850"/>
    <property type="gene ID" value="FBgn0261555"/>
</dbReference>
<dbReference type="GeneID" id="39111"/>
<dbReference type="KEGG" id="dme:Dmel_CG42673"/>
<dbReference type="UCSC" id="CG32048-RA">
    <molecule id="Q8SXX4-1"/>
    <property type="organism name" value="d. melanogaster"/>
</dbReference>
<dbReference type="AGR" id="FB:FBgn0261555"/>
<dbReference type="FlyBase" id="FBgn0261555">
    <property type="gene designation" value="CG42673"/>
</dbReference>
<dbReference type="VEuPathDB" id="VectorBase:FBgn0261555"/>
<dbReference type="eggNOG" id="KOG4815">
    <property type="taxonomic scope" value="Eukaryota"/>
</dbReference>
<dbReference type="GeneTree" id="ENSGT00940000169335"/>
<dbReference type="HOGENOM" id="CLU_014963_0_0_1"/>
<dbReference type="InParanoid" id="Q8SXX4"/>
<dbReference type="OrthoDB" id="10030336at2759"/>
<dbReference type="PhylomeDB" id="Q8SXX4"/>
<dbReference type="BioGRID-ORCS" id="39111">
    <property type="hits" value="0 hits in 3 CRISPR screens"/>
</dbReference>
<dbReference type="ChiTaRS" id="CG42673">
    <property type="organism name" value="fly"/>
</dbReference>
<dbReference type="GenomeRNAi" id="39111"/>
<dbReference type="PRO" id="PR:Q8SXX4"/>
<dbReference type="Proteomes" id="UP000000803">
    <property type="component" value="Chromosome 3L"/>
</dbReference>
<dbReference type="Bgee" id="FBgn0261555">
    <property type="expression patterns" value="Expressed in visceral muscle cell in digestive tract and 177 other cell types or tissues"/>
</dbReference>
<dbReference type="ExpressionAtlas" id="Q8SXX4">
    <property type="expression patterns" value="baseline and differential"/>
</dbReference>
<dbReference type="GO" id="GO:0098978">
    <property type="term" value="C:glutamatergic synapse"/>
    <property type="evidence" value="ECO:0000250"/>
    <property type="project" value="FlyBase"/>
</dbReference>
<dbReference type="GO" id="GO:0050998">
    <property type="term" value="F:nitric-oxide synthase binding"/>
    <property type="evidence" value="ECO:0000318"/>
    <property type="project" value="GO_Central"/>
</dbReference>
<dbReference type="GO" id="GO:0098974">
    <property type="term" value="P:postsynaptic actin cytoskeleton organization"/>
    <property type="evidence" value="ECO:0000250"/>
    <property type="project" value="FlyBase"/>
</dbReference>
<dbReference type="CDD" id="cd01270">
    <property type="entry name" value="PTB_CAPON-like"/>
    <property type="match status" value="1"/>
</dbReference>
<dbReference type="FunFam" id="2.30.29.30:FF:000124">
    <property type="entry name" value="carboxyl-terminal PDZ ligand of neuronal nitric oxide synthase protein-like"/>
    <property type="match status" value="1"/>
</dbReference>
<dbReference type="Gene3D" id="2.30.29.30">
    <property type="entry name" value="Pleckstrin-homology domain (PH domain)/Phosphotyrosine-binding domain (PTB)"/>
    <property type="match status" value="1"/>
</dbReference>
<dbReference type="InterPro" id="IPR051133">
    <property type="entry name" value="Adapter_Engulfment-Domain"/>
</dbReference>
<dbReference type="InterPro" id="IPR011993">
    <property type="entry name" value="PH-like_dom_sf"/>
</dbReference>
<dbReference type="InterPro" id="IPR006020">
    <property type="entry name" value="PTB/PI_dom"/>
</dbReference>
<dbReference type="PANTHER" id="PTHR11232:SF17">
    <property type="entry name" value="CAPON-LIKE PROTEIN"/>
    <property type="match status" value="1"/>
</dbReference>
<dbReference type="PANTHER" id="PTHR11232">
    <property type="entry name" value="PHOSPHOTYROSINE INTERACTION DOMAIN-CONTAINING FAMILY MEMBER"/>
    <property type="match status" value="1"/>
</dbReference>
<dbReference type="Pfam" id="PF00640">
    <property type="entry name" value="PID"/>
    <property type="match status" value="1"/>
</dbReference>
<dbReference type="SMART" id="SM00462">
    <property type="entry name" value="PTB"/>
    <property type="match status" value="1"/>
</dbReference>
<dbReference type="SUPFAM" id="SSF50729">
    <property type="entry name" value="PH domain-like"/>
    <property type="match status" value="1"/>
</dbReference>
<dbReference type="PROSITE" id="PS01179">
    <property type="entry name" value="PID"/>
    <property type="match status" value="1"/>
</dbReference>
<evidence type="ECO:0000250" key="1"/>
<evidence type="ECO:0000255" key="2"/>
<evidence type="ECO:0000255" key="3">
    <source>
        <dbReference type="PROSITE-ProRule" id="PRU00148"/>
    </source>
</evidence>
<evidence type="ECO:0000256" key="4">
    <source>
        <dbReference type="SAM" id="MobiDB-lite"/>
    </source>
</evidence>
<evidence type="ECO:0000269" key="5">
    <source>
    </source>
</evidence>
<evidence type="ECO:0000303" key="6">
    <source>
    </source>
</evidence>
<comment type="function">
    <text evidence="1">Putative adapter protein.</text>
</comment>
<comment type="alternative products">
    <event type="alternative splicing"/>
    <isoform>
        <id>Q8SXX4-1</id>
        <name>1</name>
        <sequence type="displayed"/>
    </isoform>
    <isoform>
        <id>Q8SXX4-2</id>
        <name>2</name>
        <sequence type="described" ref="VSP_012464"/>
    </isoform>
</comment>
<comment type="tissue specificity">
    <text evidence="5">Expressed at higher level in wing imaginal disk.</text>
</comment>
<gene>
    <name type="ORF">CG42673</name>
</gene>
<protein>
    <recommendedName>
        <fullName>Capon-like protein</fullName>
    </recommendedName>
</protein>
<keyword id="KW-0025">Alternative splicing</keyword>
<keyword id="KW-0175">Coiled coil</keyword>
<keyword id="KW-1185">Reference proteome</keyword>
<reference key="1">
    <citation type="journal article" date="2000" name="Science">
        <title>The genome sequence of Drosophila melanogaster.</title>
        <authorList>
            <person name="Adams M.D."/>
            <person name="Celniker S.E."/>
            <person name="Holt R.A."/>
            <person name="Evans C.A."/>
            <person name="Gocayne J.D."/>
            <person name="Amanatides P.G."/>
            <person name="Scherer S.E."/>
            <person name="Li P.W."/>
            <person name="Hoskins R.A."/>
            <person name="Galle R.F."/>
            <person name="George R.A."/>
            <person name="Lewis S.E."/>
            <person name="Richards S."/>
            <person name="Ashburner M."/>
            <person name="Henderson S.N."/>
            <person name="Sutton G.G."/>
            <person name="Wortman J.R."/>
            <person name="Yandell M.D."/>
            <person name="Zhang Q."/>
            <person name="Chen L.X."/>
            <person name="Brandon R.C."/>
            <person name="Rogers Y.-H.C."/>
            <person name="Blazej R.G."/>
            <person name="Champe M."/>
            <person name="Pfeiffer B.D."/>
            <person name="Wan K.H."/>
            <person name="Doyle C."/>
            <person name="Baxter E.G."/>
            <person name="Helt G."/>
            <person name="Nelson C.R."/>
            <person name="Miklos G.L.G."/>
            <person name="Abril J.F."/>
            <person name="Agbayani A."/>
            <person name="An H.-J."/>
            <person name="Andrews-Pfannkoch C."/>
            <person name="Baldwin D."/>
            <person name="Ballew R.M."/>
            <person name="Basu A."/>
            <person name="Baxendale J."/>
            <person name="Bayraktaroglu L."/>
            <person name="Beasley E.M."/>
            <person name="Beeson K.Y."/>
            <person name="Benos P.V."/>
            <person name="Berman B.P."/>
            <person name="Bhandari D."/>
            <person name="Bolshakov S."/>
            <person name="Borkova D."/>
            <person name="Botchan M.R."/>
            <person name="Bouck J."/>
            <person name="Brokstein P."/>
            <person name="Brottier P."/>
            <person name="Burtis K.C."/>
            <person name="Busam D.A."/>
            <person name="Butler H."/>
            <person name="Cadieu E."/>
            <person name="Center A."/>
            <person name="Chandra I."/>
            <person name="Cherry J.M."/>
            <person name="Cawley S."/>
            <person name="Dahlke C."/>
            <person name="Davenport L.B."/>
            <person name="Davies P."/>
            <person name="de Pablos B."/>
            <person name="Delcher A."/>
            <person name="Deng Z."/>
            <person name="Mays A.D."/>
            <person name="Dew I."/>
            <person name="Dietz S.M."/>
            <person name="Dodson K."/>
            <person name="Doup L.E."/>
            <person name="Downes M."/>
            <person name="Dugan-Rocha S."/>
            <person name="Dunkov B.C."/>
            <person name="Dunn P."/>
            <person name="Durbin K.J."/>
            <person name="Evangelista C.C."/>
            <person name="Ferraz C."/>
            <person name="Ferriera S."/>
            <person name="Fleischmann W."/>
            <person name="Fosler C."/>
            <person name="Gabrielian A.E."/>
            <person name="Garg N.S."/>
            <person name="Gelbart W.M."/>
            <person name="Glasser K."/>
            <person name="Glodek A."/>
            <person name="Gong F."/>
            <person name="Gorrell J.H."/>
            <person name="Gu Z."/>
            <person name="Guan P."/>
            <person name="Harris M."/>
            <person name="Harris N.L."/>
            <person name="Harvey D.A."/>
            <person name="Heiman T.J."/>
            <person name="Hernandez J.R."/>
            <person name="Houck J."/>
            <person name="Hostin D."/>
            <person name="Houston K.A."/>
            <person name="Howland T.J."/>
            <person name="Wei M.-H."/>
            <person name="Ibegwam C."/>
            <person name="Jalali M."/>
            <person name="Kalush F."/>
            <person name="Karpen G.H."/>
            <person name="Ke Z."/>
            <person name="Kennison J.A."/>
            <person name="Ketchum K.A."/>
            <person name="Kimmel B.E."/>
            <person name="Kodira C.D."/>
            <person name="Kraft C.L."/>
            <person name="Kravitz S."/>
            <person name="Kulp D."/>
            <person name="Lai Z."/>
            <person name="Lasko P."/>
            <person name="Lei Y."/>
            <person name="Levitsky A.A."/>
            <person name="Li J.H."/>
            <person name="Li Z."/>
            <person name="Liang Y."/>
            <person name="Lin X."/>
            <person name="Liu X."/>
            <person name="Mattei B."/>
            <person name="McIntosh T.C."/>
            <person name="McLeod M.P."/>
            <person name="McPherson D."/>
            <person name="Merkulov G."/>
            <person name="Milshina N.V."/>
            <person name="Mobarry C."/>
            <person name="Morris J."/>
            <person name="Moshrefi A."/>
            <person name="Mount S.M."/>
            <person name="Moy M."/>
            <person name="Murphy B."/>
            <person name="Murphy L."/>
            <person name="Muzny D.M."/>
            <person name="Nelson D.L."/>
            <person name="Nelson D.R."/>
            <person name="Nelson K.A."/>
            <person name="Nixon K."/>
            <person name="Nusskern D.R."/>
            <person name="Pacleb J.M."/>
            <person name="Palazzolo M."/>
            <person name="Pittman G.S."/>
            <person name="Pan S."/>
            <person name="Pollard J."/>
            <person name="Puri V."/>
            <person name="Reese M.G."/>
            <person name="Reinert K."/>
            <person name="Remington K."/>
            <person name="Saunders R.D.C."/>
            <person name="Scheeler F."/>
            <person name="Shen H."/>
            <person name="Shue B.C."/>
            <person name="Siden-Kiamos I."/>
            <person name="Simpson M."/>
            <person name="Skupski M.P."/>
            <person name="Smith T.J."/>
            <person name="Spier E."/>
            <person name="Spradling A.C."/>
            <person name="Stapleton M."/>
            <person name="Strong R."/>
            <person name="Sun E."/>
            <person name="Svirskas R."/>
            <person name="Tector C."/>
            <person name="Turner R."/>
            <person name="Venter E."/>
            <person name="Wang A.H."/>
            <person name="Wang X."/>
            <person name="Wang Z.-Y."/>
            <person name="Wassarman D.A."/>
            <person name="Weinstock G.M."/>
            <person name="Weissenbach J."/>
            <person name="Williams S.M."/>
            <person name="Woodage T."/>
            <person name="Worley K.C."/>
            <person name="Wu D."/>
            <person name="Yang S."/>
            <person name="Yao Q.A."/>
            <person name="Ye J."/>
            <person name="Yeh R.-F."/>
            <person name="Zaveri J.S."/>
            <person name="Zhan M."/>
            <person name="Zhang G."/>
            <person name="Zhao Q."/>
            <person name="Zheng L."/>
            <person name="Zheng X.H."/>
            <person name="Zhong F.N."/>
            <person name="Zhong W."/>
            <person name="Zhou X."/>
            <person name="Zhu S.C."/>
            <person name="Zhu X."/>
            <person name="Smith H.O."/>
            <person name="Gibbs R.A."/>
            <person name="Myers E.W."/>
            <person name="Rubin G.M."/>
            <person name="Venter J.C."/>
        </authorList>
    </citation>
    <scope>NUCLEOTIDE SEQUENCE [LARGE SCALE GENOMIC DNA]</scope>
    <source>
        <strain>Berkeley</strain>
    </source>
</reference>
<reference key="2">
    <citation type="journal article" date="2002" name="Genome Biol.">
        <title>Annotation of the Drosophila melanogaster euchromatic genome: a systematic review.</title>
        <authorList>
            <person name="Misra S."/>
            <person name="Crosby M.A."/>
            <person name="Mungall C.J."/>
            <person name="Matthews B.B."/>
            <person name="Campbell K.S."/>
            <person name="Hradecky P."/>
            <person name="Huang Y."/>
            <person name="Kaminker J.S."/>
            <person name="Millburn G.H."/>
            <person name="Prochnik S.E."/>
            <person name="Smith C.D."/>
            <person name="Tupy J.L."/>
            <person name="Whitfield E.J."/>
            <person name="Bayraktaroglu L."/>
            <person name="Berman B.P."/>
            <person name="Bettencourt B.R."/>
            <person name="Celniker S.E."/>
            <person name="de Grey A.D.N.J."/>
            <person name="Drysdale R.A."/>
            <person name="Harris N.L."/>
            <person name="Richter J."/>
            <person name="Russo S."/>
            <person name="Schroeder A.J."/>
            <person name="Shu S.Q."/>
            <person name="Stapleton M."/>
            <person name="Yamada C."/>
            <person name="Ashburner M."/>
            <person name="Gelbart W.M."/>
            <person name="Rubin G.M."/>
            <person name="Lewis S.E."/>
        </authorList>
    </citation>
    <scope>GENOME REANNOTATION</scope>
    <scope>ALTERNATIVE SPLICING</scope>
    <source>
        <strain>Berkeley</strain>
    </source>
</reference>
<reference key="3">
    <citation type="journal article" date="2002" name="Genome Biol.">
        <title>A Drosophila full-length cDNA resource.</title>
        <authorList>
            <person name="Stapleton M."/>
            <person name="Carlson J.W."/>
            <person name="Brokstein P."/>
            <person name="Yu C."/>
            <person name="Champe M."/>
            <person name="George R.A."/>
            <person name="Guarin H."/>
            <person name="Kronmiller B."/>
            <person name="Pacleb J.M."/>
            <person name="Park S."/>
            <person name="Wan K.H."/>
            <person name="Rubin G.M."/>
            <person name="Celniker S.E."/>
        </authorList>
    </citation>
    <scope>NUCLEOTIDE SEQUENCE [LARGE SCALE MRNA] (ISOFORMS 1 AND 2)</scope>
    <source>
        <strain>Berkeley</strain>
        <tissue>Embryo</tissue>
    </source>
</reference>
<reference key="4">
    <citation type="journal article" date="2003" name="Development">
        <title>Discovery of genes with highly restricted expression patterns in the Drosophila wing disc using DNA oligonucleotide microarrays.</title>
        <authorList>
            <person name="Butler M.J."/>
            <person name="Jacobsen T.L."/>
            <person name="Cain D.M."/>
            <person name="Jarman M.G."/>
            <person name="Hubank M."/>
            <person name="Whittle J.R.S."/>
            <person name="Phillips R."/>
            <person name="Simcox A."/>
        </authorList>
    </citation>
    <scope>TISSUE SPECIFICITY</scope>
</reference>